<evidence type="ECO:0000255" key="1">
    <source>
        <dbReference type="HAMAP-Rule" id="MF_00045"/>
    </source>
</evidence>
<gene>
    <name evidence="1" type="primary">orn</name>
    <name type="ordered locus">Ent638_0348</name>
</gene>
<sequence length="181" mass="20744">MSADENNLIWIDLEMTGLDPERDRIIEIATLVTDANLNILAEGPTIAVHQSDAQLALMDDWNVRTHTGSGLVERVKASTQGDREAELATIEFLKQWIPAGKSPICGNSIGQDRRFLFKYMPELEAYFHYRYLDVSTLKELARRWKPEILDGFKKQGTHQAMDDIRESVAELAFYRENFIKL</sequence>
<keyword id="KW-0963">Cytoplasm</keyword>
<keyword id="KW-0269">Exonuclease</keyword>
<keyword id="KW-0378">Hydrolase</keyword>
<keyword id="KW-0540">Nuclease</keyword>
<proteinExistence type="inferred from homology"/>
<protein>
    <recommendedName>
        <fullName evidence="1">Oligoribonuclease</fullName>
        <ecNumber evidence="1">3.1.15.-</ecNumber>
    </recommendedName>
</protein>
<name>ORN_ENT38</name>
<reference key="1">
    <citation type="journal article" date="2010" name="PLoS Genet.">
        <title>Genome sequence of the plant growth promoting endophytic bacterium Enterobacter sp. 638.</title>
        <authorList>
            <person name="Taghavi S."/>
            <person name="van der Lelie D."/>
            <person name="Hoffman A."/>
            <person name="Zhang Y.B."/>
            <person name="Walla M.D."/>
            <person name="Vangronsveld J."/>
            <person name="Newman L."/>
            <person name="Monchy S."/>
        </authorList>
    </citation>
    <scope>NUCLEOTIDE SEQUENCE [LARGE SCALE GENOMIC DNA]</scope>
    <source>
        <strain>638</strain>
    </source>
</reference>
<organism>
    <name type="scientific">Enterobacter sp. (strain 638)</name>
    <dbReference type="NCBI Taxonomy" id="399742"/>
    <lineage>
        <taxon>Bacteria</taxon>
        <taxon>Pseudomonadati</taxon>
        <taxon>Pseudomonadota</taxon>
        <taxon>Gammaproteobacteria</taxon>
        <taxon>Enterobacterales</taxon>
        <taxon>Enterobacteriaceae</taxon>
        <taxon>Enterobacter</taxon>
    </lineage>
</organism>
<feature type="chain" id="PRO_1000057311" description="Oligoribonuclease">
    <location>
        <begin position="1"/>
        <end position="181"/>
    </location>
</feature>
<feature type="domain" description="Exonuclease" evidence="1">
    <location>
        <begin position="8"/>
        <end position="171"/>
    </location>
</feature>
<feature type="active site" evidence="1">
    <location>
        <position position="129"/>
    </location>
</feature>
<accession>A4W5Q6</accession>
<comment type="function">
    <text evidence="1">3'-to-5' exoribonuclease specific for small oligoribonucleotides.</text>
</comment>
<comment type="subcellular location">
    <subcellularLocation>
        <location evidence="1">Cytoplasm</location>
    </subcellularLocation>
</comment>
<comment type="similarity">
    <text evidence="1">Belongs to the oligoribonuclease family.</text>
</comment>
<dbReference type="EC" id="3.1.15.-" evidence="1"/>
<dbReference type="EMBL" id="CP000653">
    <property type="protein sequence ID" value="ABP59036.1"/>
    <property type="molecule type" value="Genomic_DNA"/>
</dbReference>
<dbReference type="RefSeq" id="WP_011915609.1">
    <property type="nucleotide sequence ID" value="NC_009436.1"/>
</dbReference>
<dbReference type="SMR" id="A4W5Q6"/>
<dbReference type="STRING" id="399742.Ent638_0348"/>
<dbReference type="GeneID" id="93307527"/>
<dbReference type="KEGG" id="ent:Ent638_0348"/>
<dbReference type="eggNOG" id="COG1949">
    <property type="taxonomic scope" value="Bacteria"/>
</dbReference>
<dbReference type="HOGENOM" id="CLU_064761_2_0_6"/>
<dbReference type="OrthoDB" id="9801329at2"/>
<dbReference type="Proteomes" id="UP000000230">
    <property type="component" value="Chromosome"/>
</dbReference>
<dbReference type="GO" id="GO:0005737">
    <property type="term" value="C:cytoplasm"/>
    <property type="evidence" value="ECO:0007669"/>
    <property type="project" value="UniProtKB-SubCell"/>
</dbReference>
<dbReference type="GO" id="GO:0000175">
    <property type="term" value="F:3'-5'-RNA exonuclease activity"/>
    <property type="evidence" value="ECO:0007669"/>
    <property type="project" value="InterPro"/>
</dbReference>
<dbReference type="GO" id="GO:0003676">
    <property type="term" value="F:nucleic acid binding"/>
    <property type="evidence" value="ECO:0007669"/>
    <property type="project" value="InterPro"/>
</dbReference>
<dbReference type="GO" id="GO:0006259">
    <property type="term" value="P:DNA metabolic process"/>
    <property type="evidence" value="ECO:0007669"/>
    <property type="project" value="UniProtKB-ARBA"/>
</dbReference>
<dbReference type="CDD" id="cd06135">
    <property type="entry name" value="Orn"/>
    <property type="match status" value="1"/>
</dbReference>
<dbReference type="FunFam" id="3.30.420.10:FF:000003">
    <property type="entry name" value="Oligoribonuclease"/>
    <property type="match status" value="1"/>
</dbReference>
<dbReference type="Gene3D" id="3.30.420.10">
    <property type="entry name" value="Ribonuclease H-like superfamily/Ribonuclease H"/>
    <property type="match status" value="1"/>
</dbReference>
<dbReference type="HAMAP" id="MF_00045">
    <property type="entry name" value="Oligoribonuclease"/>
    <property type="match status" value="1"/>
</dbReference>
<dbReference type="InterPro" id="IPR013520">
    <property type="entry name" value="Exonuclease_RNaseT/DNA_pol3"/>
</dbReference>
<dbReference type="InterPro" id="IPR022894">
    <property type="entry name" value="Oligoribonuclease"/>
</dbReference>
<dbReference type="InterPro" id="IPR012337">
    <property type="entry name" value="RNaseH-like_sf"/>
</dbReference>
<dbReference type="InterPro" id="IPR036397">
    <property type="entry name" value="RNaseH_sf"/>
</dbReference>
<dbReference type="NCBIfam" id="NF003765">
    <property type="entry name" value="PRK05359.1"/>
    <property type="match status" value="1"/>
</dbReference>
<dbReference type="PANTHER" id="PTHR11046">
    <property type="entry name" value="OLIGORIBONUCLEASE, MITOCHONDRIAL"/>
    <property type="match status" value="1"/>
</dbReference>
<dbReference type="PANTHER" id="PTHR11046:SF0">
    <property type="entry name" value="OLIGORIBONUCLEASE, MITOCHONDRIAL"/>
    <property type="match status" value="1"/>
</dbReference>
<dbReference type="Pfam" id="PF00929">
    <property type="entry name" value="RNase_T"/>
    <property type="match status" value="1"/>
</dbReference>
<dbReference type="SMART" id="SM00479">
    <property type="entry name" value="EXOIII"/>
    <property type="match status" value="1"/>
</dbReference>
<dbReference type="SUPFAM" id="SSF53098">
    <property type="entry name" value="Ribonuclease H-like"/>
    <property type="match status" value="1"/>
</dbReference>